<sequence>RGSNLTHPLRNIGDLFYVGN</sequence>
<protein>
    <recommendedName>
        <fullName>Pregnancy-associated glycoprotein 67A</fullName>
        <ecNumber>3.4.23.-</ecNumber>
    </recommendedName>
    <alternativeName>
        <fullName>EbPAG-A 67 kDa</fullName>
    </alternativeName>
</protein>
<dbReference type="EC" id="3.4.23.-"/>
<dbReference type="iPTMnet" id="P85319"/>
<dbReference type="GO" id="GO:0005576">
    <property type="term" value="C:extracellular region"/>
    <property type="evidence" value="ECO:0007669"/>
    <property type="project" value="UniProtKB-SubCell"/>
</dbReference>
<dbReference type="GO" id="GO:0004190">
    <property type="term" value="F:aspartic-type endopeptidase activity"/>
    <property type="evidence" value="ECO:0007669"/>
    <property type="project" value="UniProtKB-KW"/>
</dbReference>
<dbReference type="GO" id="GO:0006508">
    <property type="term" value="P:proteolysis"/>
    <property type="evidence" value="ECO:0007669"/>
    <property type="project" value="UniProtKB-KW"/>
</dbReference>
<feature type="chain" id="PRO_0000314071" description="Pregnancy-associated glycoprotein 67A">
    <location>
        <begin position="1"/>
        <end position="20" status="greater than"/>
    </location>
</feature>
<feature type="glycosylation site" description="N-linked (GlcNAc...) asparagine" evidence="2">
    <location>
        <position position="4"/>
    </location>
</feature>
<feature type="glycosylation site" description="N-linked (GlcNAc...) asparagine" evidence="2">
    <location>
        <position position="20"/>
    </location>
</feature>
<feature type="non-terminal residue" evidence="3">
    <location>
        <position position="20"/>
    </location>
</feature>
<proteinExistence type="evidence at protein level"/>
<keyword id="KW-0064">Aspartyl protease</keyword>
<keyword id="KW-0903">Direct protein sequencing</keyword>
<keyword id="KW-0325">Glycoprotein</keyword>
<keyword id="KW-0378">Hydrolase</keyword>
<keyword id="KW-0645">Protease</keyword>
<keyword id="KW-0964">Secreted</keyword>
<name>PA67A_BISBO</name>
<evidence type="ECO:0000255" key="1"/>
<evidence type="ECO:0000269" key="2">
    <source>
    </source>
</evidence>
<evidence type="ECO:0000303" key="3">
    <source>
    </source>
</evidence>
<evidence type="ECO:0000305" key="4"/>
<accession>P85319</accession>
<organism>
    <name type="scientific">Bison bonasus</name>
    <name type="common">European bison</name>
    <dbReference type="NCBI Taxonomy" id="9902"/>
    <lineage>
        <taxon>Eukaryota</taxon>
        <taxon>Metazoa</taxon>
        <taxon>Chordata</taxon>
        <taxon>Craniata</taxon>
        <taxon>Vertebrata</taxon>
        <taxon>Euteleostomi</taxon>
        <taxon>Mammalia</taxon>
        <taxon>Eutheria</taxon>
        <taxon>Laurasiatheria</taxon>
        <taxon>Artiodactyla</taxon>
        <taxon>Ruminantia</taxon>
        <taxon>Pecora</taxon>
        <taxon>Bovidae</taxon>
        <taxon>Bovinae</taxon>
        <taxon>Bison</taxon>
    </lineage>
</organism>
<comment type="subcellular location">
    <subcellularLocation>
        <location evidence="4">Secreted</location>
        <location evidence="4">Extracellular space</location>
    </subcellularLocation>
</comment>
<comment type="tissue specificity">
    <text evidence="2">Chorionic epithelium (trophectoderm) and placental cotyledons.</text>
</comment>
<comment type="developmental stage">
    <text evidence="2">Expressed at 45 dpc.</text>
</comment>
<comment type="miscellaneous">
    <text evidence="2">On the 2D-gel the determined pI of this protein is: 6.8, its MW is: 67 kDa.</text>
</comment>
<comment type="similarity">
    <text evidence="1">Belongs to the peptidase A1 family.</text>
</comment>
<reference key="1">
    <citation type="journal article" date="2009" name="Anim. Reprod. Sci.">
        <title>Identification of multiple pregnancy-associated glycoproteins (PAGs) purified from the European bison (Eb; Bison bonasus L.) placentas.</title>
        <authorList>
            <person name="Kiewisz J."/>
            <person name="Melo de Sousa N."/>
            <person name="Beckers J.-F.M.P."/>
            <person name="Panasiewicz G."/>
            <person name="Gizejewski Z."/>
            <person name="Szafranska B."/>
        </authorList>
    </citation>
    <scope>PROTEIN SEQUENCE</scope>
    <scope>TISSUE SPECIFICITY</scope>
    <scope>DEVELOPMENTAL STAGE</scope>
    <scope>GLYCOSYLATION AT ASN-4 AND ASN-20</scope>
    <source>
        <tissue>Placenta</tissue>
    </source>
</reference>